<protein>
    <recommendedName>
        <fullName>Gallinacin-8</fullName>
        <shortName>Gal 8</shortName>
    </recommendedName>
    <alternativeName>
        <fullName>Beta-defensin 8</fullName>
    </alternativeName>
    <alternativeName>
        <fullName>Gallinacin-12</fullName>
        <shortName>Gal-12</shortName>
    </alternativeName>
</protein>
<keyword id="KW-0044">Antibiotic</keyword>
<keyword id="KW-0929">Antimicrobial</keyword>
<keyword id="KW-0211">Defensin</keyword>
<keyword id="KW-1015">Disulfide bond</keyword>
<keyword id="KW-1185">Reference proteome</keyword>
<keyword id="KW-0964">Secreted</keyword>
<keyword id="KW-0732">Signal</keyword>
<name>GLL8_CHICK</name>
<sequence>MKILYLLLAVLLTVLQSSLGFMRVPNNEAQCEQAGGICSKDHCFHLHTRAFGHCQRGVPCCRTVYD</sequence>
<reference key="1">
    <citation type="journal article" date="2004" name="BMC Genomics">
        <title>A genome-wide screen identifies a single beta-defensin gene cluster in the chicken: implications for the origin and evolution of mammalian defensins.</title>
        <authorList>
            <person name="Xiao Y."/>
            <person name="Hughes A.L."/>
            <person name="Ando J."/>
            <person name="Matsuda Y."/>
            <person name="Cheng J.-F."/>
            <person name="Skinner-Noble D."/>
            <person name="Zhang G."/>
        </authorList>
    </citation>
    <scope>NUCLEOTIDE SEQUENCE [GENOMIC DNA / MRNA]</scope>
    <scope>TISSUE SPECIFICITY</scope>
</reference>
<reference key="2">
    <citation type="journal article" date="2005" name="Immunogenetics">
        <title>The synthetic form of a novel chicken beta-defensin identified in silico is predominantly active against intestinal pathogens.</title>
        <authorList>
            <person name="Higgs R."/>
            <person name="Lynn D.J."/>
            <person name="Gaines S."/>
            <person name="McMahon J."/>
            <person name="Tierney J."/>
            <person name="James T."/>
            <person name="Lloyd A.T."/>
            <person name="Mulcahy G."/>
            <person name="O'Farrelly C."/>
        </authorList>
    </citation>
    <scope>NUCLEOTIDE SEQUENCE [MRNA]</scope>
    <scope>TISSUE SPECIFICITY</scope>
    <source>
        <tissue>Gall bladder</tissue>
    </source>
</reference>
<reference key="3">
    <citation type="submission" date="2006-07" db="EMBL/GenBank/DDBJ databases">
        <title>Chicken beta-defensin in China chicken breeds.</title>
        <authorList>
            <person name="Chen Y."/>
            <person name="Cao Y."/>
            <person name="Xie Q."/>
            <person name="Bi Y."/>
            <person name="Chen J."/>
        </authorList>
    </citation>
    <scope>NUCLEOTIDE SEQUENCE [MRNA]</scope>
    <source>
        <strain>Guangxi Huang</strain>
        <strain>Huiyang bearded</strain>
        <strain>Qingyuan Ma</strain>
        <strain>Taihe silkies</strain>
        <strain>Xinghua</strain>
    </source>
</reference>
<reference key="4">
    <citation type="journal article" date="2007" name="Reproduction">
        <title>Changes in the expression of gallinacins, antimicrobial peptides, in ovarian follicles during follicular growth and in response to lipopolysaccharide in laying hens (Gallus domesticus).</title>
        <authorList>
            <person name="Subedi K."/>
            <person name="Isobe N."/>
            <person name="Nishibori M."/>
            <person name="Yoshimura Y."/>
        </authorList>
    </citation>
    <scope>TISSUE SPECIFICITY</scope>
    <scope>DEVELOPMENTAL STAGE</scope>
    <scope>INDUCTION</scope>
</reference>
<gene>
    <name type="primary">GAL8</name>
</gene>
<proteinExistence type="evidence at transcript level"/>
<feature type="signal peptide" evidence="2">
    <location>
        <begin position="1"/>
        <end position="19"/>
    </location>
</feature>
<feature type="propeptide" id="PRO_0000288568" evidence="1">
    <location>
        <begin position="20"/>
        <end position="25"/>
    </location>
</feature>
<feature type="chain" id="PRO_0000288569" description="Gallinacin-8">
    <location>
        <begin position="26"/>
        <end position="66"/>
    </location>
</feature>
<feature type="disulfide bond" evidence="1">
    <location>
        <begin position="31"/>
        <end position="60"/>
    </location>
</feature>
<feature type="disulfide bond" evidence="1">
    <location>
        <begin position="38"/>
        <end position="54"/>
    </location>
</feature>
<feature type="disulfide bond" evidence="1">
    <location>
        <begin position="43"/>
        <end position="61"/>
    </location>
</feature>
<feature type="sequence conflict" description="In Ref. 1; AAT48932." evidence="6" ref="1">
    <original>L</original>
    <variation>F</variation>
    <location>
        <position position="6"/>
    </location>
</feature>
<accession>Q6IV23</accession>
<accession>Q6GXI7</accession>
<dbReference type="EMBL" id="AY621310">
    <property type="protein sequence ID" value="AAT45548.1"/>
    <property type="molecule type" value="mRNA"/>
</dbReference>
<dbReference type="EMBL" id="AY621323">
    <property type="protein sequence ID" value="AAT48932.1"/>
    <property type="molecule type" value="Genomic_DNA"/>
</dbReference>
<dbReference type="EMBL" id="AY701474">
    <property type="protein sequence ID" value="AAU07922.1"/>
    <property type="molecule type" value="mRNA"/>
</dbReference>
<dbReference type="EMBL" id="DQ677639">
    <property type="protein sequence ID" value="ABG73373.1"/>
    <property type="molecule type" value="mRNA"/>
</dbReference>
<dbReference type="EMBL" id="DQ858305">
    <property type="protein sequence ID" value="ABI48221.1"/>
    <property type="molecule type" value="mRNA"/>
</dbReference>
<dbReference type="EMBL" id="DQ858318">
    <property type="protein sequence ID" value="ABI48234.1"/>
    <property type="molecule type" value="mRNA"/>
</dbReference>
<dbReference type="EMBL" id="DQ858331">
    <property type="protein sequence ID" value="ABI48247.1"/>
    <property type="molecule type" value="mRNA"/>
</dbReference>
<dbReference type="EMBL" id="DQ858345">
    <property type="protein sequence ID" value="ABI48261.1"/>
    <property type="molecule type" value="mRNA"/>
</dbReference>
<dbReference type="RefSeq" id="NP_001001781.1">
    <property type="nucleotide sequence ID" value="NM_001001781.1"/>
</dbReference>
<dbReference type="FunCoup" id="Q6IV23">
    <property type="interactions" value="17"/>
</dbReference>
<dbReference type="STRING" id="9031.ENSGALP00000035929"/>
<dbReference type="PaxDb" id="9031-ENSGALP00000035929"/>
<dbReference type="GeneID" id="414875"/>
<dbReference type="KEGG" id="gga:414875"/>
<dbReference type="CTD" id="414875"/>
<dbReference type="VEuPathDB" id="HostDB:geneid_414875"/>
<dbReference type="eggNOG" id="ENOG502TD9I">
    <property type="taxonomic scope" value="Eukaryota"/>
</dbReference>
<dbReference type="HOGENOM" id="CLU_189296_3_0_1"/>
<dbReference type="InParanoid" id="Q6IV23"/>
<dbReference type="OMA" id="MRAPNND"/>
<dbReference type="OrthoDB" id="9210026at2759"/>
<dbReference type="PRO" id="PR:Q6IV23"/>
<dbReference type="Proteomes" id="UP000000539">
    <property type="component" value="Unassembled WGS sequence"/>
</dbReference>
<dbReference type="GO" id="GO:0005615">
    <property type="term" value="C:extracellular space"/>
    <property type="evidence" value="ECO:0000318"/>
    <property type="project" value="GO_Central"/>
</dbReference>
<dbReference type="GO" id="GO:0031731">
    <property type="term" value="F:CCR6 chemokine receptor binding"/>
    <property type="evidence" value="ECO:0000318"/>
    <property type="project" value="GO_Central"/>
</dbReference>
<dbReference type="GO" id="GO:0042056">
    <property type="term" value="F:chemoattractant activity"/>
    <property type="evidence" value="ECO:0000318"/>
    <property type="project" value="GO_Central"/>
</dbReference>
<dbReference type="GO" id="GO:0060326">
    <property type="term" value="P:cell chemotaxis"/>
    <property type="evidence" value="ECO:0000318"/>
    <property type="project" value="GO_Central"/>
</dbReference>
<dbReference type="GO" id="GO:0042742">
    <property type="term" value="P:defense response to bacterium"/>
    <property type="evidence" value="ECO:0000318"/>
    <property type="project" value="GO_Central"/>
</dbReference>
<dbReference type="InterPro" id="IPR001855">
    <property type="entry name" value="Defensin_beta-like"/>
</dbReference>
<dbReference type="PANTHER" id="PTHR20515">
    <property type="entry name" value="BETA-DEFENSIN"/>
    <property type="match status" value="1"/>
</dbReference>
<dbReference type="PANTHER" id="PTHR20515:SF20">
    <property type="entry name" value="GALLINACIN-1-RELATED"/>
    <property type="match status" value="1"/>
</dbReference>
<dbReference type="Pfam" id="PF00711">
    <property type="entry name" value="Defensin_beta"/>
    <property type="match status" value="1"/>
</dbReference>
<organism>
    <name type="scientific">Gallus gallus</name>
    <name type="common">Chicken</name>
    <dbReference type="NCBI Taxonomy" id="9031"/>
    <lineage>
        <taxon>Eukaryota</taxon>
        <taxon>Metazoa</taxon>
        <taxon>Chordata</taxon>
        <taxon>Craniata</taxon>
        <taxon>Vertebrata</taxon>
        <taxon>Euteleostomi</taxon>
        <taxon>Archelosauria</taxon>
        <taxon>Archosauria</taxon>
        <taxon>Dinosauria</taxon>
        <taxon>Saurischia</taxon>
        <taxon>Theropoda</taxon>
        <taxon>Coelurosauria</taxon>
        <taxon>Aves</taxon>
        <taxon>Neognathae</taxon>
        <taxon>Galloanserae</taxon>
        <taxon>Galliformes</taxon>
        <taxon>Phasianidae</taxon>
        <taxon>Phasianinae</taxon>
        <taxon>Gallus</taxon>
    </lineage>
</organism>
<evidence type="ECO:0000250" key="1"/>
<evidence type="ECO:0000255" key="2"/>
<evidence type="ECO:0000269" key="3">
    <source>
    </source>
</evidence>
<evidence type="ECO:0000269" key="4">
    <source>
    </source>
</evidence>
<evidence type="ECO:0000269" key="5">
    <source>
    </source>
</evidence>
<evidence type="ECO:0000305" key="6"/>
<comment type="function">
    <text evidence="1">Has bactericidal activity.</text>
</comment>
<comment type="subcellular location">
    <subcellularLocation>
        <location>Secreted</location>
    </subcellularLocation>
    <subcellularLocation>
        <location evidence="1">Cytoplasmic granule</location>
    </subcellularLocation>
</comment>
<comment type="tissue specificity">
    <text evidence="3 4 5">Expressed in the liver, kidney, gall bladder, testis, ovary and male and femae reproductive tracts. Expressed in the ovarian stroma and the theca and granulosa layers of the ovarian follicle.</text>
</comment>
<comment type="developmental stage">
    <text evidence="5">Detected in the theca and granulosa layers of the ovarian follicle in the white follicle (WF), F1, F3, F5, and postovulatory follicle stages.</text>
</comment>
<comment type="induction">
    <text evidence="5">Induced in the theca layer of the F3 stage ovarian follicle by intravenous injection of LPS. Expression in the granulosa layer of the ovarian follicle is not affected by intravenous injection of LPS.</text>
</comment>
<comment type="similarity">
    <text evidence="6">Belongs to the beta-defensin family.</text>
</comment>